<sequence>MSQRSAGPELLRLIDLIAKLPGLGPRSARRVALHLLKRNDTLLKPLAEALAEAGAKIQKCATCGNFDTVQPCAVCQMPGRDDGIICVVEDVPDLWALERGGSFRGRYHVLGGALSAIDGIGPEDLGIASLVARVDAGGVREVILALNATVDGQTTAHYVADLLAGKGVDVTRLAHGVPVGGELDHLDDGTLAAALRSRRGV</sequence>
<organism>
    <name type="scientific">Hyphomonas neptunium (strain ATCC 15444)</name>
    <dbReference type="NCBI Taxonomy" id="228405"/>
    <lineage>
        <taxon>Bacteria</taxon>
        <taxon>Pseudomonadati</taxon>
        <taxon>Pseudomonadota</taxon>
        <taxon>Alphaproteobacteria</taxon>
        <taxon>Hyphomonadales</taxon>
        <taxon>Hyphomonadaceae</taxon>
        <taxon>Hyphomonas</taxon>
    </lineage>
</organism>
<accession>Q0C593</accession>
<comment type="function">
    <text evidence="1">May play a role in DNA repair. It seems to be involved in an RecBC-independent recombinational process of DNA repair. It may act with RecF and RecO.</text>
</comment>
<comment type="similarity">
    <text evidence="1">Belongs to the RecR family.</text>
</comment>
<gene>
    <name evidence="1" type="primary">recR</name>
    <name type="ordered locus">HNE_0370</name>
</gene>
<evidence type="ECO:0000255" key="1">
    <source>
        <dbReference type="HAMAP-Rule" id="MF_00017"/>
    </source>
</evidence>
<protein>
    <recommendedName>
        <fullName evidence="1">Recombination protein RecR</fullName>
    </recommendedName>
</protein>
<name>RECR_HYPNA</name>
<reference key="1">
    <citation type="journal article" date="2006" name="J. Bacteriol.">
        <title>Comparative genomic evidence for a close relationship between the dimorphic prosthecate bacteria Hyphomonas neptunium and Caulobacter crescentus.</title>
        <authorList>
            <person name="Badger J.H."/>
            <person name="Hoover T.R."/>
            <person name="Brun Y.V."/>
            <person name="Weiner R.M."/>
            <person name="Laub M.T."/>
            <person name="Alexandre G."/>
            <person name="Mrazek J."/>
            <person name="Ren Q."/>
            <person name="Paulsen I.T."/>
            <person name="Nelson K.E."/>
            <person name="Khouri H.M."/>
            <person name="Radune D."/>
            <person name="Sosa J."/>
            <person name="Dodson R.J."/>
            <person name="Sullivan S.A."/>
            <person name="Rosovitz M.J."/>
            <person name="Madupu R."/>
            <person name="Brinkac L.M."/>
            <person name="Durkin A.S."/>
            <person name="Daugherty S.C."/>
            <person name="Kothari S.P."/>
            <person name="Giglio M.G."/>
            <person name="Zhou L."/>
            <person name="Haft D.H."/>
            <person name="Selengut J.D."/>
            <person name="Davidsen T.M."/>
            <person name="Yang Q."/>
            <person name="Zafar N."/>
            <person name="Ward N.L."/>
        </authorList>
    </citation>
    <scope>NUCLEOTIDE SEQUENCE [LARGE SCALE GENOMIC DNA]</scope>
    <source>
        <strain>ATCC 15444</strain>
    </source>
</reference>
<dbReference type="EMBL" id="CP000158">
    <property type="protein sequence ID" value="ABI78284.1"/>
    <property type="molecule type" value="Genomic_DNA"/>
</dbReference>
<dbReference type="RefSeq" id="WP_011645400.1">
    <property type="nucleotide sequence ID" value="NC_008358.1"/>
</dbReference>
<dbReference type="SMR" id="Q0C593"/>
<dbReference type="STRING" id="228405.HNE_0370"/>
<dbReference type="KEGG" id="hne:HNE_0370"/>
<dbReference type="eggNOG" id="COG0353">
    <property type="taxonomic scope" value="Bacteria"/>
</dbReference>
<dbReference type="HOGENOM" id="CLU_060739_1_1_5"/>
<dbReference type="Proteomes" id="UP000001959">
    <property type="component" value="Chromosome"/>
</dbReference>
<dbReference type="GO" id="GO:0003677">
    <property type="term" value="F:DNA binding"/>
    <property type="evidence" value="ECO:0007669"/>
    <property type="project" value="UniProtKB-UniRule"/>
</dbReference>
<dbReference type="GO" id="GO:0008270">
    <property type="term" value="F:zinc ion binding"/>
    <property type="evidence" value="ECO:0007669"/>
    <property type="project" value="UniProtKB-KW"/>
</dbReference>
<dbReference type="GO" id="GO:0006310">
    <property type="term" value="P:DNA recombination"/>
    <property type="evidence" value="ECO:0007669"/>
    <property type="project" value="UniProtKB-UniRule"/>
</dbReference>
<dbReference type="GO" id="GO:0006281">
    <property type="term" value="P:DNA repair"/>
    <property type="evidence" value="ECO:0007669"/>
    <property type="project" value="UniProtKB-UniRule"/>
</dbReference>
<dbReference type="CDD" id="cd01025">
    <property type="entry name" value="TOPRIM_recR"/>
    <property type="match status" value="1"/>
</dbReference>
<dbReference type="Gene3D" id="3.40.1360.10">
    <property type="match status" value="1"/>
</dbReference>
<dbReference type="Gene3D" id="6.10.250.240">
    <property type="match status" value="1"/>
</dbReference>
<dbReference type="Gene3D" id="1.10.8.420">
    <property type="entry name" value="RecR Domain 1"/>
    <property type="match status" value="1"/>
</dbReference>
<dbReference type="HAMAP" id="MF_00017">
    <property type="entry name" value="RecR"/>
    <property type="match status" value="1"/>
</dbReference>
<dbReference type="InterPro" id="IPR000093">
    <property type="entry name" value="DNA_Rcmb_RecR"/>
</dbReference>
<dbReference type="InterPro" id="IPR023627">
    <property type="entry name" value="Rcmb_RecR"/>
</dbReference>
<dbReference type="InterPro" id="IPR015967">
    <property type="entry name" value="Rcmb_RecR_Znf"/>
</dbReference>
<dbReference type="InterPro" id="IPR006171">
    <property type="entry name" value="TOPRIM_dom"/>
</dbReference>
<dbReference type="InterPro" id="IPR034137">
    <property type="entry name" value="TOPRIM_RecR"/>
</dbReference>
<dbReference type="NCBIfam" id="TIGR00615">
    <property type="entry name" value="recR"/>
    <property type="match status" value="1"/>
</dbReference>
<dbReference type="PANTHER" id="PTHR30446">
    <property type="entry name" value="RECOMBINATION PROTEIN RECR"/>
    <property type="match status" value="1"/>
</dbReference>
<dbReference type="PANTHER" id="PTHR30446:SF0">
    <property type="entry name" value="RECOMBINATION PROTEIN RECR"/>
    <property type="match status" value="1"/>
</dbReference>
<dbReference type="Pfam" id="PF21175">
    <property type="entry name" value="RecR_C"/>
    <property type="match status" value="1"/>
</dbReference>
<dbReference type="Pfam" id="PF21176">
    <property type="entry name" value="RecR_HhH"/>
    <property type="match status" value="1"/>
</dbReference>
<dbReference type="Pfam" id="PF13662">
    <property type="entry name" value="Toprim_4"/>
    <property type="match status" value="1"/>
</dbReference>
<dbReference type="SMART" id="SM00493">
    <property type="entry name" value="TOPRIM"/>
    <property type="match status" value="1"/>
</dbReference>
<dbReference type="SUPFAM" id="SSF111304">
    <property type="entry name" value="Recombination protein RecR"/>
    <property type="match status" value="1"/>
</dbReference>
<dbReference type="PROSITE" id="PS01300">
    <property type="entry name" value="RECR"/>
    <property type="match status" value="1"/>
</dbReference>
<dbReference type="PROSITE" id="PS50880">
    <property type="entry name" value="TOPRIM"/>
    <property type="match status" value="1"/>
</dbReference>
<feature type="chain" id="PRO_0000322897" description="Recombination protein RecR">
    <location>
        <begin position="1"/>
        <end position="201"/>
    </location>
</feature>
<feature type="domain" description="Toprim" evidence="1">
    <location>
        <begin position="83"/>
        <end position="178"/>
    </location>
</feature>
<feature type="zinc finger region" description="C4-type" evidence="1">
    <location>
        <begin position="60"/>
        <end position="75"/>
    </location>
</feature>
<keyword id="KW-0227">DNA damage</keyword>
<keyword id="KW-0233">DNA recombination</keyword>
<keyword id="KW-0234">DNA repair</keyword>
<keyword id="KW-0479">Metal-binding</keyword>
<keyword id="KW-1185">Reference proteome</keyword>
<keyword id="KW-0862">Zinc</keyword>
<keyword id="KW-0863">Zinc-finger</keyword>
<proteinExistence type="inferred from homology"/>